<comment type="function">
    <text evidence="1">Core subunit of the mitochondrial membrane respiratory chain NADH dehydrogenase (Complex I) which catalyzes electron transfer from NADH through the respiratory chain, using ubiquinone as an electron acceptor. Part of the enzyme membrane arm which is embedded in the lipid bilayer and involved in proton translocation.</text>
</comment>
<comment type="catalytic activity">
    <reaction evidence="1">
        <text>a ubiquinone + NADH + 5 H(+)(in) = a ubiquinol + NAD(+) + 4 H(+)(out)</text>
        <dbReference type="Rhea" id="RHEA:29091"/>
        <dbReference type="Rhea" id="RHEA-COMP:9565"/>
        <dbReference type="Rhea" id="RHEA-COMP:9566"/>
        <dbReference type="ChEBI" id="CHEBI:15378"/>
        <dbReference type="ChEBI" id="CHEBI:16389"/>
        <dbReference type="ChEBI" id="CHEBI:17976"/>
        <dbReference type="ChEBI" id="CHEBI:57540"/>
        <dbReference type="ChEBI" id="CHEBI:57945"/>
        <dbReference type="EC" id="7.1.1.2"/>
    </reaction>
    <physiologicalReaction direction="left-to-right" evidence="1">
        <dbReference type="Rhea" id="RHEA:29092"/>
    </physiologicalReaction>
</comment>
<comment type="subunit">
    <text evidence="2">Core subunit of respiratory chain NADH dehydrogenase (Complex I) which is composed of 45 different subunits.</text>
</comment>
<comment type="subcellular location">
    <subcellularLocation>
        <location evidence="2">Mitochondrion inner membrane</location>
        <topology evidence="3">Multi-pass membrane protein</topology>
    </subcellularLocation>
</comment>
<comment type="similarity">
    <text evidence="4">Belongs to the complex I subunit 4L family.</text>
</comment>
<dbReference type="EC" id="7.1.1.2"/>
<dbReference type="EMBL" id="AJ639869">
    <property type="protein sequence ID" value="CAG26389.1"/>
    <property type="molecule type" value="Genomic_DNA"/>
</dbReference>
<dbReference type="RefSeq" id="YP_161268.1">
    <property type="nucleotide sequence ID" value="NC_006523.1"/>
</dbReference>
<dbReference type="SMR" id="Q5QS58"/>
<dbReference type="GeneID" id="3186963"/>
<dbReference type="CTD" id="4539"/>
<dbReference type="GO" id="GO:0005743">
    <property type="term" value="C:mitochondrial inner membrane"/>
    <property type="evidence" value="ECO:0000250"/>
    <property type="project" value="UniProtKB"/>
</dbReference>
<dbReference type="GO" id="GO:0045271">
    <property type="term" value="C:respiratory chain complex I"/>
    <property type="evidence" value="ECO:0000250"/>
    <property type="project" value="UniProtKB"/>
</dbReference>
<dbReference type="GO" id="GO:0008137">
    <property type="term" value="F:NADH dehydrogenase (ubiquinone) activity"/>
    <property type="evidence" value="ECO:0000250"/>
    <property type="project" value="UniProtKB"/>
</dbReference>
<dbReference type="GO" id="GO:0042773">
    <property type="term" value="P:ATP synthesis coupled electron transport"/>
    <property type="evidence" value="ECO:0007669"/>
    <property type="project" value="InterPro"/>
</dbReference>
<dbReference type="FunFam" id="1.10.287.3510:FF:000002">
    <property type="entry name" value="NADH-ubiquinone oxidoreductase chain 4L"/>
    <property type="match status" value="1"/>
</dbReference>
<dbReference type="Gene3D" id="1.10.287.3510">
    <property type="match status" value="1"/>
</dbReference>
<dbReference type="InterPro" id="IPR001133">
    <property type="entry name" value="NADH_UbQ_OxRdtase_chain4L/K"/>
</dbReference>
<dbReference type="InterPro" id="IPR039428">
    <property type="entry name" value="NUOK/Mnh_C1-like"/>
</dbReference>
<dbReference type="PANTHER" id="PTHR11434:SF0">
    <property type="entry name" value="NADH-UBIQUINONE OXIDOREDUCTASE CHAIN 4L"/>
    <property type="match status" value="1"/>
</dbReference>
<dbReference type="PANTHER" id="PTHR11434">
    <property type="entry name" value="NADH-UBIQUINONE OXIDOREDUCTASE SUBUNIT ND4L"/>
    <property type="match status" value="1"/>
</dbReference>
<dbReference type="Pfam" id="PF00420">
    <property type="entry name" value="Oxidored_q2"/>
    <property type="match status" value="1"/>
</dbReference>
<organism>
    <name type="scientific">Phascogale tapoatafa</name>
    <name type="common">Common wambenger</name>
    <dbReference type="NCBI Taxonomy" id="9293"/>
    <lineage>
        <taxon>Eukaryota</taxon>
        <taxon>Metazoa</taxon>
        <taxon>Chordata</taxon>
        <taxon>Craniata</taxon>
        <taxon>Vertebrata</taxon>
        <taxon>Euteleostomi</taxon>
        <taxon>Mammalia</taxon>
        <taxon>Metatheria</taxon>
        <taxon>Dasyuromorphia</taxon>
        <taxon>Dasyuridae</taxon>
        <taxon>Phascogale</taxon>
    </lineage>
</organism>
<proteinExistence type="inferred from homology"/>
<accession>Q5QS58</accession>
<name>NU4LM_PHATA</name>
<sequence length="98" mass="10796">MLPIHLNLTVAFFLALAGVLIYRSHLMSTLLCLEGMMLSLFILMALMITHFQVFSVSMIPLILLVFSACEAGVGLALLVKISTTHGNDYIQNLNLLQC</sequence>
<gene>
    <name type="primary">MT-ND4L</name>
    <name type="synonym">MTND4L</name>
    <name type="synonym">NADH4L</name>
    <name type="synonym">ND4L</name>
</gene>
<geneLocation type="mitochondrion"/>
<reference key="1">
    <citation type="journal article" date="2004" name="Gene">
        <title>Marsupial relationships and a timeline for marsupial radiation in South Gondwana.</title>
        <authorList>
            <person name="Nilsson M.A."/>
            <person name="Arnason U."/>
            <person name="Spencer P.B.S."/>
            <person name="Janke A."/>
        </authorList>
    </citation>
    <scope>NUCLEOTIDE SEQUENCE [GENOMIC DNA]</scope>
    <source>
        <tissue>Muscle</tissue>
    </source>
</reference>
<protein>
    <recommendedName>
        <fullName>NADH-ubiquinone oxidoreductase chain 4L</fullName>
        <ecNumber>7.1.1.2</ecNumber>
    </recommendedName>
    <alternativeName>
        <fullName>NADH dehydrogenase subunit 4L</fullName>
    </alternativeName>
</protein>
<keyword id="KW-0249">Electron transport</keyword>
<keyword id="KW-0472">Membrane</keyword>
<keyword id="KW-0496">Mitochondrion</keyword>
<keyword id="KW-0999">Mitochondrion inner membrane</keyword>
<keyword id="KW-0520">NAD</keyword>
<keyword id="KW-0679">Respiratory chain</keyword>
<keyword id="KW-1278">Translocase</keyword>
<keyword id="KW-0812">Transmembrane</keyword>
<keyword id="KW-1133">Transmembrane helix</keyword>
<keyword id="KW-0813">Transport</keyword>
<keyword id="KW-0830">Ubiquinone</keyword>
<evidence type="ECO:0000250" key="1">
    <source>
        <dbReference type="UniProtKB" id="P03901"/>
    </source>
</evidence>
<evidence type="ECO:0000250" key="2">
    <source>
        <dbReference type="UniProtKB" id="P03902"/>
    </source>
</evidence>
<evidence type="ECO:0000255" key="3"/>
<evidence type="ECO:0000305" key="4"/>
<feature type="chain" id="PRO_0000275090" description="NADH-ubiquinone oxidoreductase chain 4L">
    <location>
        <begin position="1"/>
        <end position="98"/>
    </location>
</feature>
<feature type="transmembrane region" description="Helical" evidence="3">
    <location>
        <begin position="1"/>
        <end position="21"/>
    </location>
</feature>
<feature type="transmembrane region" description="Helical" evidence="3">
    <location>
        <begin position="29"/>
        <end position="49"/>
    </location>
</feature>
<feature type="transmembrane region" description="Helical" evidence="3">
    <location>
        <begin position="59"/>
        <end position="79"/>
    </location>
</feature>